<dbReference type="EMBL" id="AB018413">
    <property type="protein sequence ID" value="BAA76737.1"/>
    <property type="molecule type" value="mRNA"/>
</dbReference>
<dbReference type="EMBL" id="AB011143">
    <property type="protein sequence ID" value="BAA25497.2"/>
    <property type="status" value="ALT_INIT"/>
    <property type="molecule type" value="mRNA"/>
</dbReference>
<dbReference type="EMBL" id="AP002985">
    <property type="status" value="NOT_ANNOTATED_CDS"/>
    <property type="molecule type" value="Genomic_DNA"/>
</dbReference>
<dbReference type="EMBL" id="CH471076">
    <property type="protein sequence ID" value="EAW75057.1"/>
    <property type="molecule type" value="Genomic_DNA"/>
</dbReference>
<dbReference type="EMBL" id="CH471076">
    <property type="protein sequence ID" value="EAW75058.1"/>
    <property type="molecule type" value="Genomic_DNA"/>
</dbReference>
<dbReference type="EMBL" id="BC131711">
    <property type="protein sequence ID" value="AAI31712.1"/>
    <property type="molecule type" value="mRNA"/>
</dbReference>
<dbReference type="EMBL" id="BC152459">
    <property type="protein sequence ID" value="AAI52460.1"/>
    <property type="molecule type" value="mRNA"/>
</dbReference>
<dbReference type="CCDS" id="CCDS8259.1">
    <molecule id="Q9UQC2-1"/>
</dbReference>
<dbReference type="CCDS" id="CCDS8260.1">
    <molecule id="Q9UQC2-2"/>
</dbReference>
<dbReference type="RefSeq" id="NP_036428.1">
    <molecule id="Q9UQC2-2"/>
    <property type="nucleotide sequence ID" value="NM_012296.4"/>
</dbReference>
<dbReference type="RefSeq" id="NP_536739.1">
    <molecule id="Q9UQC2-1"/>
    <property type="nucleotide sequence ID" value="NM_080491.3"/>
</dbReference>
<dbReference type="RefSeq" id="XP_006718816.1">
    <property type="nucleotide sequence ID" value="XM_006718753.2"/>
</dbReference>
<dbReference type="RefSeq" id="XP_047283891.1">
    <molecule id="Q9UQC2-2"/>
    <property type="nucleotide sequence ID" value="XM_047427935.1"/>
</dbReference>
<dbReference type="RefSeq" id="XP_047283892.1">
    <molecule id="Q9UQC2-2"/>
    <property type="nucleotide sequence ID" value="XM_047427936.1"/>
</dbReference>
<dbReference type="RefSeq" id="XP_054226611.1">
    <molecule id="Q9UQC2-2"/>
    <property type="nucleotide sequence ID" value="XM_054370636.1"/>
</dbReference>
<dbReference type="RefSeq" id="XP_054226612.1">
    <molecule id="Q9UQC2-2"/>
    <property type="nucleotide sequence ID" value="XM_054370637.1"/>
</dbReference>
<dbReference type="RefSeq" id="XP_054226613.1">
    <molecule id="Q9UQC2-2"/>
    <property type="nucleotide sequence ID" value="XM_054370638.1"/>
</dbReference>
<dbReference type="RefSeq" id="XP_054226614.1">
    <molecule id="Q9UQC2-2"/>
    <property type="nucleotide sequence ID" value="XM_054370639.1"/>
</dbReference>
<dbReference type="RefSeq" id="XP_054226615.1">
    <molecule id="Q9UQC2-2"/>
    <property type="nucleotide sequence ID" value="XM_054370640.1"/>
</dbReference>
<dbReference type="PDB" id="2VWF">
    <property type="method" value="X-ray"/>
    <property type="resolution" value="1.58 A"/>
    <property type="chains" value="B=508-522"/>
</dbReference>
<dbReference type="PDB" id="2W0Z">
    <property type="method" value="X-ray"/>
    <property type="resolution" value="1.70 A"/>
    <property type="chains" value="B=350-358"/>
</dbReference>
<dbReference type="PDB" id="5EWZ">
    <property type="method" value="X-ray"/>
    <property type="resolution" value="2.34 A"/>
    <property type="chains" value="C=387-395, D=207-212"/>
</dbReference>
<dbReference type="PDB" id="5EXA">
    <property type="method" value="X-ray"/>
    <property type="resolution" value="1.95 A"/>
    <property type="chains" value="C/D=387-396"/>
</dbReference>
<dbReference type="PDB" id="6Y3R">
    <property type="method" value="X-ray"/>
    <property type="resolution" value="1.50 A"/>
    <property type="chains" value="P=387-398"/>
</dbReference>
<dbReference type="PDB" id="6Y3S">
    <property type="method" value="X-ray"/>
    <property type="resolution" value="1.95 A"/>
    <property type="chains" value="P=205-214"/>
</dbReference>
<dbReference type="PDB" id="6ZVB">
    <property type="method" value="X-ray"/>
    <property type="resolution" value="2.51 A"/>
    <property type="chains" value="P=386-398"/>
</dbReference>
<dbReference type="PDB" id="6ZVC">
    <property type="method" value="X-ray"/>
    <property type="resolution" value="2.51 A"/>
    <property type="chains" value="P=386-398"/>
</dbReference>
<dbReference type="PDB" id="6ZVD">
    <property type="method" value="X-ray"/>
    <property type="resolution" value="2.50 A"/>
    <property type="chains" value="P=386-398"/>
</dbReference>
<dbReference type="PDB" id="6ZVE">
    <property type="method" value="X-ray"/>
    <property type="resolution" value="2.51 A"/>
    <property type="chains" value="P=386-398"/>
</dbReference>
<dbReference type="PDBsum" id="2VWF"/>
<dbReference type="PDBsum" id="2W0Z"/>
<dbReference type="PDBsum" id="5EWZ"/>
<dbReference type="PDBsum" id="5EXA"/>
<dbReference type="PDBsum" id="6Y3R"/>
<dbReference type="PDBsum" id="6Y3S"/>
<dbReference type="PDBsum" id="6ZVB"/>
<dbReference type="PDBsum" id="6ZVC"/>
<dbReference type="PDBsum" id="6ZVD"/>
<dbReference type="PDBsum" id="6ZVE"/>
<dbReference type="SMR" id="Q9UQC2"/>
<dbReference type="BioGRID" id="115181">
    <property type="interactions" value="121"/>
</dbReference>
<dbReference type="CORUM" id="Q9UQC2"/>
<dbReference type="DIP" id="DIP-36653N"/>
<dbReference type="FunCoup" id="Q9UQC2">
    <property type="interactions" value="1272"/>
</dbReference>
<dbReference type="IntAct" id="Q9UQC2">
    <property type="interactions" value="86"/>
</dbReference>
<dbReference type="MINT" id="Q9UQC2"/>
<dbReference type="STRING" id="9606.ENSP00000354952"/>
<dbReference type="iPTMnet" id="Q9UQC2"/>
<dbReference type="PhosphoSitePlus" id="Q9UQC2"/>
<dbReference type="BioMuta" id="GAB2"/>
<dbReference type="DMDM" id="46396035"/>
<dbReference type="jPOST" id="Q9UQC2"/>
<dbReference type="MassIVE" id="Q9UQC2"/>
<dbReference type="PaxDb" id="9606-ENSP00000354952"/>
<dbReference type="PeptideAtlas" id="Q9UQC2"/>
<dbReference type="ProteomicsDB" id="85541">
    <molecule id="Q9UQC2-1"/>
</dbReference>
<dbReference type="ProteomicsDB" id="85542">
    <molecule id="Q9UQC2-2"/>
</dbReference>
<dbReference type="Pumba" id="Q9UQC2"/>
<dbReference type="Antibodypedia" id="600">
    <property type="antibodies" value="738 antibodies from 38 providers"/>
</dbReference>
<dbReference type="DNASU" id="9846"/>
<dbReference type="Ensembl" id="ENST00000340149.6">
    <molecule id="Q9UQC2-2"/>
    <property type="protein sequence ID" value="ENSP00000343959.2"/>
    <property type="gene ID" value="ENSG00000033327.13"/>
</dbReference>
<dbReference type="Ensembl" id="ENST00000361507.5">
    <molecule id="Q9UQC2-1"/>
    <property type="protein sequence ID" value="ENSP00000354952.4"/>
    <property type="gene ID" value="ENSG00000033327.13"/>
</dbReference>
<dbReference type="GeneID" id="9846"/>
<dbReference type="KEGG" id="hsa:9846"/>
<dbReference type="MANE-Select" id="ENST00000361507.5">
    <property type="protein sequence ID" value="ENSP00000354952.4"/>
    <property type="RefSeq nucleotide sequence ID" value="NM_080491.3"/>
    <property type="RefSeq protein sequence ID" value="NP_536739.1"/>
</dbReference>
<dbReference type="UCSC" id="uc001ozg.4">
    <molecule id="Q9UQC2-1"/>
    <property type="organism name" value="human"/>
</dbReference>
<dbReference type="AGR" id="HGNC:14458"/>
<dbReference type="CTD" id="9846"/>
<dbReference type="DisGeNET" id="9846"/>
<dbReference type="GeneCards" id="GAB2"/>
<dbReference type="HGNC" id="HGNC:14458">
    <property type="gene designation" value="GAB2"/>
</dbReference>
<dbReference type="HPA" id="ENSG00000033327">
    <property type="expression patterns" value="Tissue enhanced (brain)"/>
</dbReference>
<dbReference type="MIM" id="606203">
    <property type="type" value="gene"/>
</dbReference>
<dbReference type="neXtProt" id="NX_Q9UQC2"/>
<dbReference type="OpenTargets" id="ENSG00000033327"/>
<dbReference type="PharmGKB" id="PA28478"/>
<dbReference type="VEuPathDB" id="HostDB:ENSG00000033327"/>
<dbReference type="eggNOG" id="ENOG502QTS1">
    <property type="taxonomic scope" value="Eukaryota"/>
</dbReference>
<dbReference type="GeneTree" id="ENSGT00940000157792"/>
<dbReference type="HOGENOM" id="CLU_028652_0_0_1"/>
<dbReference type="InParanoid" id="Q9UQC2"/>
<dbReference type="OMA" id="MAQCHRR"/>
<dbReference type="OrthoDB" id="67516at2759"/>
<dbReference type="PAN-GO" id="Q9UQC2">
    <property type="GO annotations" value="3 GO annotations based on evolutionary models"/>
</dbReference>
<dbReference type="PhylomeDB" id="Q9UQC2"/>
<dbReference type="TreeFam" id="TF329487"/>
<dbReference type="PathwayCommons" id="Q9UQC2"/>
<dbReference type="Reactome" id="R-HSA-109704">
    <property type="pathway name" value="PI3K Cascade"/>
</dbReference>
<dbReference type="Reactome" id="R-HSA-1257604">
    <property type="pathway name" value="PIP3 activates AKT signaling"/>
</dbReference>
<dbReference type="Reactome" id="R-HSA-1433557">
    <property type="pathway name" value="Signaling by SCF-KIT"/>
</dbReference>
<dbReference type="Reactome" id="R-HSA-1839117">
    <property type="pathway name" value="Signaling by cytosolic FGFR1 fusion mutants"/>
</dbReference>
<dbReference type="Reactome" id="R-HSA-2219530">
    <property type="pathway name" value="Constitutive Signaling by Aberrant PI3K in Cancer"/>
</dbReference>
<dbReference type="Reactome" id="R-HSA-2730905">
    <property type="pathway name" value="Role of LAT2/NTAL/LAB on calcium mobilization"/>
</dbReference>
<dbReference type="Reactome" id="R-HSA-6811558">
    <property type="pathway name" value="PI5P, PP2A and IER3 Regulate PI3K/AKT Signaling"/>
</dbReference>
<dbReference type="Reactome" id="R-HSA-8853659">
    <property type="pathway name" value="RET signaling"/>
</dbReference>
<dbReference type="Reactome" id="R-HSA-8983432">
    <property type="pathway name" value="Interleukin-15 signaling"/>
</dbReference>
<dbReference type="Reactome" id="R-HSA-912526">
    <property type="pathway name" value="Interleukin receptor SHC signaling"/>
</dbReference>
<dbReference type="Reactome" id="R-HSA-9607240">
    <property type="pathway name" value="FLT3 Signaling"/>
</dbReference>
<dbReference type="Reactome" id="R-HSA-9645135">
    <property type="pathway name" value="STAT5 Activation"/>
</dbReference>
<dbReference type="Reactome" id="R-HSA-9674555">
    <property type="pathway name" value="Signaling by CSF3 (G-CSF)"/>
</dbReference>
<dbReference type="Reactome" id="R-HSA-9680350">
    <property type="pathway name" value="Signaling by CSF1 (M-CSF) in myeloid cells"/>
</dbReference>
<dbReference type="Reactome" id="R-HSA-9702518">
    <property type="pathway name" value="STAT5 activation downstream of FLT3 ITD mutants"/>
</dbReference>
<dbReference type="Reactome" id="R-HSA-9703465">
    <property type="pathway name" value="Signaling by FLT3 fusion proteins"/>
</dbReference>
<dbReference type="Reactome" id="R-HSA-9703648">
    <property type="pathway name" value="Signaling by FLT3 ITD and TKD mutants"/>
</dbReference>
<dbReference type="SignaLink" id="Q9UQC2"/>
<dbReference type="SIGNOR" id="Q9UQC2"/>
<dbReference type="BioGRID-ORCS" id="9846">
    <property type="hits" value="68 hits in 1165 CRISPR screens"/>
</dbReference>
<dbReference type="ChiTaRS" id="GAB2">
    <property type="organism name" value="human"/>
</dbReference>
<dbReference type="EvolutionaryTrace" id="Q9UQC2"/>
<dbReference type="GeneWiki" id="GAB2"/>
<dbReference type="GenomeRNAi" id="9846"/>
<dbReference type="Pharos" id="Q9UQC2">
    <property type="development level" value="Tbio"/>
</dbReference>
<dbReference type="PRO" id="PR:Q9UQC2"/>
<dbReference type="Proteomes" id="UP000005640">
    <property type="component" value="Chromosome 11"/>
</dbReference>
<dbReference type="RNAct" id="Q9UQC2">
    <property type="molecule type" value="protein"/>
</dbReference>
<dbReference type="Bgee" id="ENSG00000033327">
    <property type="expression patterns" value="Expressed in inferior vagus X ganglion and 189 other cell types or tissues"/>
</dbReference>
<dbReference type="ExpressionAtlas" id="Q9UQC2">
    <property type="expression patterns" value="baseline and differential"/>
</dbReference>
<dbReference type="GO" id="GO:0005737">
    <property type="term" value="C:cytoplasm"/>
    <property type="evidence" value="ECO:0000314"/>
    <property type="project" value="UniProtKB"/>
</dbReference>
<dbReference type="GO" id="GO:0005829">
    <property type="term" value="C:cytosol"/>
    <property type="evidence" value="ECO:0000304"/>
    <property type="project" value="Reactome"/>
</dbReference>
<dbReference type="GO" id="GO:0045121">
    <property type="term" value="C:membrane raft"/>
    <property type="evidence" value="ECO:0000250"/>
    <property type="project" value="UniProtKB"/>
</dbReference>
<dbReference type="GO" id="GO:0005886">
    <property type="term" value="C:plasma membrane"/>
    <property type="evidence" value="ECO:0000314"/>
    <property type="project" value="HPA"/>
</dbReference>
<dbReference type="GO" id="GO:0005547">
    <property type="term" value="F:phosphatidylinositol-3,4,5-trisphosphate binding"/>
    <property type="evidence" value="ECO:0000250"/>
    <property type="project" value="UniProtKB"/>
</dbReference>
<dbReference type="GO" id="GO:0043325">
    <property type="term" value="F:phosphatidylinositol-3,4-bisphosphate binding"/>
    <property type="evidence" value="ECO:0000250"/>
    <property type="project" value="UniProtKB"/>
</dbReference>
<dbReference type="GO" id="GO:0005068">
    <property type="term" value="F:transmembrane receptor protein tyrosine kinase adaptor activity"/>
    <property type="evidence" value="ECO:0000314"/>
    <property type="project" value="UniProtKB"/>
</dbReference>
<dbReference type="GO" id="GO:0030316">
    <property type="term" value="P:osteoclast differentiation"/>
    <property type="evidence" value="ECO:0000315"/>
    <property type="project" value="UniProtKB"/>
</dbReference>
<dbReference type="GO" id="GO:0043491">
    <property type="term" value="P:phosphatidylinositol 3-kinase/protein kinase B signal transduction"/>
    <property type="evidence" value="ECO:0000250"/>
    <property type="project" value="UniProtKB"/>
</dbReference>
<dbReference type="GO" id="GO:0008284">
    <property type="term" value="P:positive regulation of cell population proliferation"/>
    <property type="evidence" value="ECO:0000314"/>
    <property type="project" value="UniProtKB"/>
</dbReference>
<dbReference type="GO" id="GO:0043306">
    <property type="term" value="P:positive regulation of mast cell degranulation"/>
    <property type="evidence" value="ECO:0000250"/>
    <property type="project" value="UniProtKB"/>
</dbReference>
<dbReference type="GO" id="GO:0007165">
    <property type="term" value="P:signal transduction"/>
    <property type="evidence" value="ECO:0000318"/>
    <property type="project" value="GO_Central"/>
</dbReference>
<dbReference type="DisProt" id="DP01507"/>
<dbReference type="FunFam" id="2.30.29.30:FF:000166">
    <property type="entry name" value="GRB2-associated-binding protein 1 isoform X1"/>
    <property type="match status" value="1"/>
</dbReference>
<dbReference type="Gene3D" id="2.30.29.30">
    <property type="entry name" value="Pleckstrin-homology domain (PH domain)/Phosphotyrosine-binding domain (PTB)"/>
    <property type="match status" value="1"/>
</dbReference>
<dbReference type="IDEAL" id="IID00522"/>
<dbReference type="InterPro" id="IPR046355">
    <property type="entry name" value="Gab1-4-like"/>
</dbReference>
<dbReference type="InterPro" id="IPR011993">
    <property type="entry name" value="PH-like_dom_sf"/>
</dbReference>
<dbReference type="InterPro" id="IPR001849">
    <property type="entry name" value="PH_domain"/>
</dbReference>
<dbReference type="PANTHER" id="PTHR45960">
    <property type="entry name" value="GRB2-ASSOCIATED-BINDING PROTEIN"/>
    <property type="match status" value="1"/>
</dbReference>
<dbReference type="PANTHER" id="PTHR45960:SF1">
    <property type="entry name" value="GRB2-ASSOCIATED-BINDING PROTEIN 2"/>
    <property type="match status" value="1"/>
</dbReference>
<dbReference type="Pfam" id="PF00169">
    <property type="entry name" value="PH"/>
    <property type="match status" value="1"/>
</dbReference>
<dbReference type="SMART" id="SM00233">
    <property type="entry name" value="PH"/>
    <property type="match status" value="1"/>
</dbReference>
<dbReference type="SUPFAM" id="SSF50729">
    <property type="entry name" value="PH domain-like"/>
    <property type="match status" value="1"/>
</dbReference>
<dbReference type="PROSITE" id="PS50003">
    <property type="entry name" value="PH_DOMAIN"/>
    <property type="match status" value="1"/>
</dbReference>
<reference key="1">
    <citation type="journal article" date="1999" name="Blood">
        <title>Gab-family adapter proteins act downstream of cytokine and growth factor receptors and T- and B-cell antigen receptors.</title>
        <authorList>
            <person name="Nishida K."/>
            <person name="Yoshida Y."/>
            <person name="Itoh M."/>
            <person name="Fukada T."/>
            <person name="Ohtani T."/>
            <person name="Shirogane T."/>
            <person name="Atsumi T."/>
            <person name="Takahashi-Tezuka M."/>
            <person name="Ishihara K."/>
            <person name="Hibi M."/>
            <person name="Hirano T."/>
        </authorList>
    </citation>
    <scope>NUCLEOTIDE SEQUENCE [MRNA] (ISOFORM 1)</scope>
    <scope>INTERACTION WITH PTPN11</scope>
    <source>
        <tissue>Myeloma</tissue>
    </source>
</reference>
<reference key="2">
    <citation type="journal article" date="1998" name="DNA Res.">
        <title>Prediction of the coding sequences of unidentified human genes. IX. The complete sequences of 100 new cDNA clones from brain which can code for large proteins in vitro.</title>
        <authorList>
            <person name="Nagase T."/>
            <person name="Ishikawa K."/>
            <person name="Miyajima N."/>
            <person name="Tanaka A."/>
            <person name="Kotani H."/>
            <person name="Nomura N."/>
            <person name="Ohara O."/>
        </authorList>
    </citation>
    <scope>NUCLEOTIDE SEQUENCE [LARGE SCALE MRNA] (ISOFORM 2)</scope>
    <source>
        <tissue>Brain</tissue>
    </source>
</reference>
<reference key="3">
    <citation type="submission" date="2004-01" db="EMBL/GenBank/DDBJ databases">
        <authorList>
            <person name="Nagase T."/>
            <person name="Ishikawa K."/>
            <person name="Miyajima N."/>
            <person name="Tanaka A."/>
            <person name="Kotani H."/>
            <person name="Nomura N."/>
            <person name="Ohara O."/>
        </authorList>
    </citation>
    <scope>SEQUENCE REVISION</scope>
</reference>
<reference key="4">
    <citation type="journal article" date="2006" name="Nature">
        <title>Human chromosome 11 DNA sequence and analysis including novel gene identification.</title>
        <authorList>
            <person name="Taylor T.D."/>
            <person name="Noguchi H."/>
            <person name="Totoki Y."/>
            <person name="Toyoda A."/>
            <person name="Kuroki Y."/>
            <person name="Dewar K."/>
            <person name="Lloyd C."/>
            <person name="Itoh T."/>
            <person name="Takeda T."/>
            <person name="Kim D.-W."/>
            <person name="She X."/>
            <person name="Barlow K.F."/>
            <person name="Bloom T."/>
            <person name="Bruford E."/>
            <person name="Chang J.L."/>
            <person name="Cuomo C.A."/>
            <person name="Eichler E."/>
            <person name="FitzGerald M.G."/>
            <person name="Jaffe D.B."/>
            <person name="LaButti K."/>
            <person name="Nicol R."/>
            <person name="Park H.-S."/>
            <person name="Seaman C."/>
            <person name="Sougnez C."/>
            <person name="Yang X."/>
            <person name="Zimmer A.R."/>
            <person name="Zody M.C."/>
            <person name="Birren B.W."/>
            <person name="Nusbaum C."/>
            <person name="Fujiyama A."/>
            <person name="Hattori M."/>
            <person name="Rogers J."/>
            <person name="Lander E.S."/>
            <person name="Sakaki Y."/>
        </authorList>
    </citation>
    <scope>NUCLEOTIDE SEQUENCE [LARGE SCALE GENOMIC DNA]</scope>
</reference>
<reference key="5">
    <citation type="submission" date="2005-07" db="EMBL/GenBank/DDBJ databases">
        <authorList>
            <person name="Mural R.J."/>
            <person name="Istrail S."/>
            <person name="Sutton G.G."/>
            <person name="Florea L."/>
            <person name="Halpern A.L."/>
            <person name="Mobarry C.M."/>
            <person name="Lippert R."/>
            <person name="Walenz B."/>
            <person name="Shatkay H."/>
            <person name="Dew I."/>
            <person name="Miller J.R."/>
            <person name="Flanigan M.J."/>
            <person name="Edwards N.J."/>
            <person name="Bolanos R."/>
            <person name="Fasulo D."/>
            <person name="Halldorsson B.V."/>
            <person name="Hannenhalli S."/>
            <person name="Turner R."/>
            <person name="Yooseph S."/>
            <person name="Lu F."/>
            <person name="Nusskern D.R."/>
            <person name="Shue B.C."/>
            <person name="Zheng X.H."/>
            <person name="Zhong F."/>
            <person name="Delcher A.L."/>
            <person name="Huson D.H."/>
            <person name="Kravitz S.A."/>
            <person name="Mouchard L."/>
            <person name="Reinert K."/>
            <person name="Remington K.A."/>
            <person name="Clark A.G."/>
            <person name="Waterman M.S."/>
            <person name="Eichler E.E."/>
            <person name="Adams M.D."/>
            <person name="Hunkapiller M.W."/>
            <person name="Myers E.W."/>
            <person name="Venter J.C."/>
        </authorList>
    </citation>
    <scope>NUCLEOTIDE SEQUENCE [LARGE SCALE GENOMIC DNA]</scope>
</reference>
<reference key="6">
    <citation type="journal article" date="2004" name="Genome Res.">
        <title>The status, quality, and expansion of the NIH full-length cDNA project: the Mammalian Gene Collection (MGC).</title>
        <authorList>
            <consortium name="The MGC Project Team"/>
        </authorList>
    </citation>
    <scope>NUCLEOTIDE SEQUENCE [LARGE SCALE MRNA] (ISOFORMS 1 AND 2)</scope>
</reference>
<reference key="7">
    <citation type="journal article" date="2004" name="J. Biol. Chem.">
        <title>Critical role for hematopoietic cell kinase (Hck)-mediated phosphorylation of Gab1 and Gab2 docking proteins in interleukin 6-induced proliferation and survival of multiple myeloma cells.</title>
        <authorList>
            <person name="Podar K."/>
            <person name="Mostoslavsky G."/>
            <person name="Sattler M."/>
            <person name="Tai Y.T."/>
            <person name="Hayashi T."/>
            <person name="Catley L.P."/>
            <person name="Hideshima T."/>
            <person name="Mulligan R.C."/>
            <person name="Chauhan D."/>
            <person name="Anderson K.C."/>
        </authorList>
    </citation>
    <scope>PHOSPHORYLATION BY HCK</scope>
    <scope>INTERACTION WITH HCK; CRKL PTPN11 AND GRB2</scope>
</reference>
<reference key="8">
    <citation type="journal article" date="2005" name="Nat. Med.">
        <title>The molecular scaffold Gab2 is a crucial component of RANK signaling and osteoclastogenesis.</title>
        <authorList>
            <person name="Wada T."/>
            <person name="Nakashima T."/>
            <person name="Oliveira-dos-Santos A.J."/>
            <person name="Gasser J."/>
            <person name="Hara H."/>
            <person name="Schett G."/>
            <person name="Penninger J.M."/>
        </authorList>
    </citation>
    <scope>FUNCTION</scope>
    <scope>INTERACTION WITH TNFRSF11A</scope>
</reference>
<reference key="9">
    <citation type="journal article" date="2008" name="EMBO J.">
        <title>Phosphorylation-dependent binding of 14-3-3 terminates signalling by the Gab2 docking protein.</title>
        <authorList>
            <person name="Brummer T."/>
            <person name="Larance M."/>
            <person name="Herrera Abreu M.T."/>
            <person name="Lyons R.J."/>
            <person name="Timpson P."/>
            <person name="Emmerich C.H."/>
            <person name="Fleuren E.D.G."/>
            <person name="Lehrbach G.M."/>
            <person name="Schramek D."/>
            <person name="Guilhaus M."/>
            <person name="James D.E."/>
            <person name="Daly R.J."/>
        </authorList>
    </citation>
    <scope>FUNCTION</scope>
    <scope>SUBCELLULAR LOCATION</scope>
    <scope>INTERACTION WITH EGFR; GRB2; PTPN11; PI-3 KINASE; SFN; SHC1; YWHAB; YWHAE; YWHAG; YWHAH; YWHAQ AND YWHAZ</scope>
    <scope>MUTAGENESIS OF SER-210 AND THR-391</scope>
    <scope>PHOSPHORYLATION AT SER-133; SER-140; SER-141; SER-148; SER-149; SER-159; SER-164; SER-210; SER-218; SER-223; SER-264; THR-278; SER-281; THR-287; TYR-293; THR-331; THR-385; THR-391; SER-405; SER-480; SER-543; SER-622 AND SER-623</scope>
</reference>
<reference key="10">
    <citation type="journal article" date="2008" name="Proc. Natl. Acad. Sci. U.S.A.">
        <title>A quantitative atlas of mitotic phosphorylation.</title>
        <authorList>
            <person name="Dephoure N."/>
            <person name="Zhou C."/>
            <person name="Villen J."/>
            <person name="Beausoleil S.A."/>
            <person name="Bakalarski C.E."/>
            <person name="Elledge S.J."/>
            <person name="Gygi S.P."/>
        </authorList>
    </citation>
    <scope>PHOSPHORYLATION [LARGE SCALE ANALYSIS] AT SER-543</scope>
    <scope>IDENTIFICATION BY MASS SPECTROMETRY [LARGE SCALE ANALYSIS]</scope>
    <source>
        <tissue>Cervix carcinoma</tissue>
    </source>
</reference>
<reference key="11">
    <citation type="journal article" date="2009" name="Sci. Signal.">
        <title>Quantitative phosphoproteomic analysis of T cell receptor signaling reveals system-wide modulation of protein-protein interactions.</title>
        <authorList>
            <person name="Mayya V."/>
            <person name="Lundgren D.H."/>
            <person name="Hwang S.-I."/>
            <person name="Rezaul K."/>
            <person name="Wu L."/>
            <person name="Eng J.K."/>
            <person name="Rodionov V."/>
            <person name="Han D.K."/>
        </authorList>
    </citation>
    <scope>IDENTIFICATION BY MASS SPECTROMETRY [LARGE SCALE ANALYSIS]</scope>
    <source>
        <tissue>Leukemic T-cell</tissue>
    </source>
</reference>
<reference key="12">
    <citation type="journal article" date="2011" name="BMC Syst. Biol.">
        <title>Initial characterization of the human central proteome.</title>
        <authorList>
            <person name="Burkard T.R."/>
            <person name="Planyavsky M."/>
            <person name="Kaupe I."/>
            <person name="Breitwieser F.P."/>
            <person name="Buerckstuemmer T."/>
            <person name="Bennett K.L."/>
            <person name="Superti-Furga G."/>
            <person name="Colinge J."/>
        </authorList>
    </citation>
    <scope>IDENTIFICATION BY MASS SPECTROMETRY [LARGE SCALE ANALYSIS]</scope>
</reference>
<reference key="13">
    <citation type="journal article" date="2013" name="Cell Res.">
        <title>Early estrogen-induced gene 1, a novel RANK signaling component, is essential for osteoclastogenesis.</title>
        <authorList>
            <person name="Choi H.K."/>
            <person name="Kang H.R."/>
            <person name="Jung E."/>
            <person name="Kim T.E."/>
            <person name="Lin J.J."/>
            <person name="Lee S.Y."/>
        </authorList>
    </citation>
    <scope>IDENTIFICATION IN A COMPLEX WITH EEIG1; TNFRSF11A; PLCG2; TEC AND BTK</scope>
</reference>
<reference key="14">
    <citation type="journal article" date="2013" name="J. Proteome Res.">
        <title>Toward a comprehensive characterization of a human cancer cell phosphoproteome.</title>
        <authorList>
            <person name="Zhou H."/>
            <person name="Di Palma S."/>
            <person name="Preisinger C."/>
            <person name="Peng M."/>
            <person name="Polat A.N."/>
            <person name="Heck A.J."/>
            <person name="Mohammed S."/>
        </authorList>
    </citation>
    <scope>PHOSPHORYLATION [LARGE SCALE ANALYSIS] AT SER-2; SER-148; SER-149; SER-223; SER-264; SER-285; THR-287; SER-368; THR-391; SER-422; SER-425; SER-543 AND TYR-643</scope>
    <scope>IDENTIFICATION BY MASS SPECTROMETRY [LARGE SCALE ANALYSIS]</scope>
    <source>
        <tissue>Cervix carcinoma</tissue>
        <tissue>Erythroleukemia</tissue>
    </source>
</reference>
<reference key="15">
    <citation type="journal article" date="2009" name="Structure">
        <title>Distinct binding modes of two epitopes in Gab2 that interact with the SH3C domain of Grb2.</title>
        <authorList>
            <person name="Harkiolaki M."/>
            <person name="Tsirka T."/>
            <person name="Lewitzky M."/>
            <person name="Simister P.C."/>
            <person name="Joshi D."/>
            <person name="Bird L.E."/>
            <person name="Jones E.Y."/>
            <person name="O'Reilly N."/>
            <person name="Feller S.M."/>
        </authorList>
    </citation>
    <scope>X-RAY CRYSTALLOGRAPHY (1.70 ANGSTROMS) OF 350-358 IN COMPLEX WITH GRB2</scope>
    <scope>X-RAY CRYSTALLOGRAPHY (1.58 ANGSTROMS) OF 508-522 IN COMPLEX WITH GRB2</scope>
</reference>
<proteinExistence type="evidence at protein level"/>
<organism>
    <name type="scientific">Homo sapiens</name>
    <name type="common">Human</name>
    <dbReference type="NCBI Taxonomy" id="9606"/>
    <lineage>
        <taxon>Eukaryota</taxon>
        <taxon>Metazoa</taxon>
        <taxon>Chordata</taxon>
        <taxon>Craniata</taxon>
        <taxon>Vertebrata</taxon>
        <taxon>Euteleostomi</taxon>
        <taxon>Mammalia</taxon>
        <taxon>Eutheria</taxon>
        <taxon>Euarchontoglires</taxon>
        <taxon>Primates</taxon>
        <taxon>Haplorrhini</taxon>
        <taxon>Catarrhini</taxon>
        <taxon>Hominidae</taxon>
        <taxon>Homo</taxon>
    </lineage>
</organism>
<comment type="function">
    <text evidence="7 8">Adapter protein which acts downstream of several membrane receptors including cytokine, antigen, hormone, cell matrix and growth factor receptors to regulate multiple signaling pathways. Regulates osteoclast differentiation mediating the TNFRSF11A/RANK signaling. In allergic response, it plays a role in mast cells activation and degranulation through PI-3-kinase regulation. Also involved in the regulation of cell proliferation and hematopoiesis.</text>
</comment>
<comment type="subunit">
    <text evidence="1 5 6 7 8 9 10">Part of a complex composed of EEIG1, TNFRSF11A/RANK, PLCG2, GAB2, TEC and BTK; complex formation increases in the presence of TNFSF11/RANKL (PubMed:23478294). Interacts with SHC1; may mediate interaction with receptors (By similarity). Interacts with SYK (By similarity). Interacts with PI-3 kinase. Interacts with GRB2 (via SH3 2 domain). Interacts (phosphorylated) with PTPN11. Interacts with TNFRSF11A (via cytoplasmic domain). Interacts (phosphorylated) with 14-3-3 family proteins SFN, YWHAB, YWHAE, YWHAG, YWHAH, YWHAQ and YWHAZ; prevents interaction with GRB2 and attenuates GAB2 signaling. Interacts with HCK.</text>
</comment>
<comment type="interaction">
    <interactant intactId="EBI-975200">
        <id>Q9UQC2</id>
    </interactant>
    <interactant intactId="EBI-2907070">
        <id>P11117</id>
        <label>ACP2</label>
    </interactant>
    <organismsDiffer>false</organismsDiffer>
    <experiments>3</experiments>
</comment>
<comment type="interaction">
    <interactant intactId="EBI-975200">
        <id>Q9UQC2</id>
    </interactant>
    <interactant intactId="EBI-297353">
        <id>P00533</id>
        <label>EGFR</label>
    </interactant>
    <organismsDiffer>false</organismsDiffer>
    <experiments>3</experiments>
</comment>
<comment type="interaction">
    <interactant intactId="EBI-975200">
        <id>Q9UQC2</id>
    </interactant>
    <interactant intactId="EBI-740418">
        <id>O75791</id>
        <label>GRAP2</label>
    </interactant>
    <organismsDiffer>false</organismsDiffer>
    <experiments>5</experiments>
</comment>
<comment type="interaction">
    <interactant intactId="EBI-975200">
        <id>Q9UQC2</id>
    </interactant>
    <interactant intactId="EBI-401755">
        <id>P62993</id>
        <label>GRB2</label>
    </interactant>
    <organismsDiffer>false</organismsDiffer>
    <experiments>15</experiments>
</comment>
<comment type="interaction">
    <interactant intactId="EBI-975200">
        <id>Q9UQC2</id>
    </interactant>
    <interactant intactId="EBI-466029">
        <id>P42858</id>
        <label>HTT</label>
    </interactant>
    <organismsDiffer>false</organismsDiffer>
    <experiments>3</experiments>
</comment>
<comment type="interaction">
    <interactant intactId="EBI-975200">
        <id>Q9UQC2</id>
    </interactant>
    <interactant intactId="EBI-7950783">
        <id>Q96JP2</id>
        <label>MYO15B</label>
    </interactant>
    <organismsDiffer>false</organismsDiffer>
    <experiments>3</experiments>
</comment>
<comment type="interaction">
    <interactant intactId="EBI-975200">
        <id>Q9UQC2</id>
    </interactant>
    <interactant intactId="EBI-297779">
        <id>Q06124</id>
        <label>PTPN11</label>
    </interactant>
    <organismsDiffer>false</organismsDiffer>
    <experiments>4</experiments>
</comment>
<comment type="interaction">
    <interactant intactId="EBI-975200">
        <id>Q9UQC2</id>
    </interactant>
    <interactant intactId="EBI-25839575">
        <id>Q8WZ73-3</id>
        <label>RFFL</label>
    </interactant>
    <organismsDiffer>false</organismsDiffer>
    <experiments>3</experiments>
</comment>
<comment type="interaction">
    <interactant intactId="EBI-975200">
        <id>Q9UQC2</id>
    </interactant>
    <interactant intactId="EBI-354112">
        <id>P08865</id>
        <label>RPSA</label>
    </interactant>
    <organismsDiffer>false</organismsDiffer>
    <experiments>3</experiments>
</comment>
<comment type="interaction">
    <interactant intactId="EBI-975200">
        <id>Q9UQC2</id>
    </interactant>
    <interactant intactId="EBI-359815">
        <id>P31946</id>
        <label>YWHAB</label>
    </interactant>
    <organismsDiffer>false</organismsDiffer>
    <experiments>7</experiments>
</comment>
<comment type="interaction">
    <interactant intactId="EBI-15787947">
        <id>Q9UQC2-1</id>
    </interactant>
    <interactant intactId="EBI-15787932">
        <id>P62993-1</id>
        <label>GRB2</label>
    </interactant>
    <organismsDiffer>false</organismsDiffer>
    <experiments>3</experiments>
</comment>
<comment type="subcellular location">
    <subcellularLocation>
        <location evidence="8">Cytoplasm</location>
    </subcellularLocation>
    <subcellularLocation>
        <location evidence="8">Cell membrane</location>
    </subcellularLocation>
    <subcellularLocation>
        <location evidence="2">Membrane raft</location>
    </subcellularLocation>
</comment>
<comment type="alternative products">
    <event type="alternative splicing"/>
    <isoform>
        <id>Q9UQC2-1</id>
        <name>1</name>
        <sequence type="displayed"/>
    </isoform>
    <isoform>
        <id>Q9UQC2-2</id>
        <name>2</name>
        <sequence type="described" ref="VSP_038520"/>
    </isoform>
</comment>
<comment type="domain">
    <text evidence="1">The SH3-binding motifs mediate interaction with SHC1 and GRB2.</text>
</comment>
<comment type="domain">
    <text evidence="1">The PH domain mediates phosphatidylinositol 3,4,5-trisphosphate and phosphatidylinositol 3,4-bisphosphate binding.</text>
</comment>
<comment type="PTM">
    <text evidence="1 6 8">Phosphorylated on tyrosine residue(s) by the thrombopoietin receptor (TPOR), stem cell factor receptor (SCFR), and T-cell and B-cell antigen receptors, gp130, IL-2R and IL-3R (By similarity). Phosphorylated upon stimulation of TNFRSF11A/RANK by TNFSF11/RANKL (By similarity). Phosphorylated upon EGF stimulation. Phosphorylated on tyrosine residues by HCK upon IL6 signaling.</text>
</comment>
<comment type="PTM">
    <text>Dephosphorylated by PTPN11.</text>
</comment>
<comment type="similarity">
    <text evidence="13">Belongs to the GAB family.</text>
</comment>
<comment type="sequence caution" evidence="13">
    <conflict type="erroneous initiation">
        <sequence resource="EMBL-CDS" id="BAA25497"/>
    </conflict>
    <text>Extended N-terminus.</text>
</comment>
<comment type="online information" name="Atlas of Genetics and Cytogenetics in Oncology and Haematology">
    <link uri="https://atlasgeneticsoncology.org/gene/40664/GAB2"/>
</comment>
<name>GAB2_HUMAN</name>
<feature type="chain" id="PRO_0000050285" description="GRB2-associated-binding protein 2">
    <location>
        <begin position="1"/>
        <end position="676"/>
    </location>
</feature>
<feature type="domain" description="PH" evidence="3">
    <location>
        <begin position="6"/>
        <end position="117"/>
    </location>
</feature>
<feature type="region of interest" description="Disordered" evidence="4">
    <location>
        <begin position="127"/>
        <end position="178"/>
    </location>
</feature>
<feature type="region of interest" description="Disordered" evidence="4">
    <location>
        <begin position="341"/>
        <end position="430"/>
    </location>
</feature>
<feature type="region of interest" description="Disordered" evidence="4">
    <location>
        <begin position="492"/>
        <end position="531"/>
    </location>
</feature>
<feature type="region of interest" description="Disordered" evidence="4">
    <location>
        <begin position="556"/>
        <end position="643"/>
    </location>
</feature>
<feature type="region of interest" description="Disordered" evidence="4">
    <location>
        <begin position="656"/>
        <end position="676"/>
    </location>
</feature>
<feature type="short sequence motif" description="SH3-binding">
    <location>
        <begin position="351"/>
        <end position="358"/>
    </location>
</feature>
<feature type="short sequence motif" description="SH3-binding">
    <location>
        <begin position="510"/>
        <end position="519"/>
    </location>
</feature>
<feature type="compositionally biased region" description="Low complexity" evidence="4">
    <location>
        <begin position="140"/>
        <end position="149"/>
    </location>
</feature>
<feature type="compositionally biased region" description="Polar residues" evidence="4">
    <location>
        <begin position="159"/>
        <end position="169"/>
    </location>
</feature>
<feature type="compositionally biased region" description="Polar residues" evidence="4">
    <location>
        <begin position="556"/>
        <end position="577"/>
    </location>
</feature>
<feature type="compositionally biased region" description="Polar residues" evidence="4">
    <location>
        <begin position="589"/>
        <end position="611"/>
    </location>
</feature>
<feature type="compositionally biased region" description="Polar residues" evidence="4">
    <location>
        <begin position="656"/>
        <end position="670"/>
    </location>
</feature>
<feature type="modified residue" description="Phosphoserine" evidence="15">
    <location>
        <position position="2"/>
    </location>
</feature>
<feature type="modified residue" description="Phosphoserine" evidence="8">
    <location>
        <position position="133"/>
    </location>
</feature>
<feature type="modified residue" description="Phosphoserine" evidence="8">
    <location>
        <position position="140"/>
    </location>
</feature>
<feature type="modified residue" description="Phosphoserine" evidence="8">
    <location>
        <position position="141"/>
    </location>
</feature>
<feature type="modified residue" description="Phosphoserine" evidence="8 15">
    <location>
        <position position="148"/>
    </location>
</feature>
<feature type="modified residue" description="Phosphoserine" evidence="8 15">
    <location>
        <position position="149"/>
    </location>
</feature>
<feature type="modified residue" description="Phosphoserine" evidence="8">
    <location>
        <position position="159"/>
    </location>
</feature>
<feature type="modified residue" description="Phosphoserine" evidence="8">
    <location>
        <position position="164"/>
    </location>
</feature>
<feature type="modified residue" description="Phosphoserine" evidence="8">
    <location>
        <position position="210"/>
    </location>
</feature>
<feature type="modified residue" description="Phosphoserine" evidence="8">
    <location>
        <position position="218"/>
    </location>
</feature>
<feature type="modified residue" description="Phosphoserine" evidence="8 15">
    <location>
        <position position="223"/>
    </location>
</feature>
<feature type="modified residue" description="Phosphoserine" evidence="8 15">
    <location>
        <position position="264"/>
    </location>
</feature>
<feature type="modified residue" description="Phosphothreonine" evidence="2">
    <location>
        <position position="265"/>
    </location>
</feature>
<feature type="modified residue" description="Phosphotyrosine" evidence="2">
    <location>
        <position position="266"/>
    </location>
</feature>
<feature type="modified residue" description="Phosphothreonine" evidence="8">
    <location>
        <position position="278"/>
    </location>
</feature>
<feature type="modified residue" description="Phosphoserine" evidence="8">
    <location>
        <position position="281"/>
    </location>
</feature>
<feature type="modified residue" description="Phosphoserine" evidence="15">
    <location>
        <position position="285"/>
    </location>
</feature>
<feature type="modified residue" description="Phosphothreonine" evidence="8 15">
    <location>
        <position position="287"/>
    </location>
</feature>
<feature type="modified residue" description="Phosphotyrosine" evidence="8">
    <location>
        <position position="293"/>
    </location>
</feature>
<feature type="modified residue" description="Phosphothreonine" evidence="8">
    <location>
        <position position="331"/>
    </location>
</feature>
<feature type="modified residue" description="Phosphoserine" evidence="15">
    <location>
        <position position="368"/>
    </location>
</feature>
<feature type="modified residue" description="Phosphothreonine" evidence="8">
    <location>
        <position position="385"/>
    </location>
</feature>
<feature type="modified residue" description="Phosphothreonine" evidence="8 15">
    <location>
        <position position="391"/>
    </location>
</feature>
<feature type="modified residue" description="Phosphoserine" evidence="8">
    <location>
        <position position="405"/>
    </location>
</feature>
<feature type="modified residue" description="Phosphothreonine" evidence="2">
    <location>
        <position position="408"/>
    </location>
</feature>
<feature type="modified residue" description="Phosphoserine" evidence="15">
    <location>
        <position position="422"/>
    </location>
</feature>
<feature type="modified residue" description="Phosphoserine" evidence="15">
    <location>
        <position position="425"/>
    </location>
</feature>
<feature type="modified residue" description="Phosphotyrosine" evidence="2">
    <location>
        <position position="452"/>
    </location>
</feature>
<feature type="modified residue" description="Phosphoserine" evidence="8">
    <location>
        <position position="480"/>
    </location>
</feature>
<feature type="modified residue" description="Phosphoserine" evidence="8 14 15">
    <location>
        <position position="543"/>
    </location>
</feature>
<feature type="modified residue" description="Phosphoserine" evidence="8">
    <location>
        <position position="622"/>
    </location>
</feature>
<feature type="modified residue" description="Phosphoserine" evidence="8">
    <location>
        <position position="623"/>
    </location>
</feature>
<feature type="modified residue" description="Phosphotyrosine" evidence="15">
    <location>
        <position position="643"/>
    </location>
</feature>
<feature type="splice variant" id="VSP_038520" description="In isoform 2." evidence="11 12">
    <location>
        <begin position="1"/>
        <end position="38"/>
    </location>
</feature>
<feature type="sequence variant" id="VAR_053097" description="In dbSNP:rs752597583.">
    <original>P</original>
    <variation>L</variation>
    <location>
        <position position="320"/>
    </location>
</feature>
<feature type="sequence variant" id="VAR_020407" description="In dbSNP:rs2279374.">
    <original>P</original>
    <variation>L</variation>
    <location>
        <position position="344"/>
    </location>
</feature>
<feature type="mutagenesis site" description="Impaired interaction with 14-3-3 proteins and increased EGF-independent cell proliferation; when associated with A-391." evidence="8">
    <original>S</original>
    <variation>A</variation>
    <variation>E</variation>
    <location>
        <position position="210"/>
    </location>
</feature>
<feature type="mutagenesis site" description="Impaired interaction with 14-3-3 proteins and increased EGF-independent cell proliferation; when associated with A-210." evidence="8">
    <original>T</original>
    <variation>A</variation>
    <variation>E</variation>
    <location>
        <position position="391"/>
    </location>
</feature>
<feature type="helix" evidence="16">
    <location>
        <begin position="515"/>
        <end position="517"/>
    </location>
</feature>
<protein>
    <recommendedName>
        <fullName>GRB2-associated-binding protein 2</fullName>
    </recommendedName>
    <alternativeName>
        <fullName>GRB2-associated binder 2</fullName>
    </alternativeName>
    <alternativeName>
        <fullName>Growth factor receptor bound protein 2-associated protein 2</fullName>
    </alternativeName>
    <alternativeName>
        <fullName>pp100</fullName>
    </alternativeName>
</protein>
<keyword id="KW-0002">3D-structure</keyword>
<keyword id="KW-0025">Alternative splicing</keyword>
<keyword id="KW-1003">Cell membrane</keyword>
<keyword id="KW-0963">Cytoplasm</keyword>
<keyword id="KW-0472">Membrane</keyword>
<keyword id="KW-0597">Phosphoprotein</keyword>
<keyword id="KW-1267">Proteomics identification</keyword>
<keyword id="KW-1185">Reference proteome</keyword>
<gene>
    <name type="primary">GAB2</name>
    <name type="synonym">KIAA0571</name>
</gene>
<sequence>MSGGGDVVCTGWLRKSPPEKKLRRYAWKKRWFILRSGRMSGDPDVLEYYKNDHSKKPLRIINLNFCEQVDAGLTFNKKELQDSFVFDIKTSERTFYLVAETEEDMNKWVQSICQICGFNQAEESTDSLRNVSSAGHGPRSSPAELSSSSQHLLRERKSSAPSHSSQPTLFTFEPPVSNHMQPTLSTSAPQEYLYLHQCISRRAENARSASFSQGTRASFLMRSDTAVQKLAQGNGHCVNGISGQVHGFYSLPKPSRHNTEFRDSTYDLPRSLASHGHTKGSLTGSETDNEDVYTFKTPSNTLCREFGDLLVDNMDVPATPLSAYQIPRTFTLDKNHNAMTVATPGDSAIAPPPRPPKPSQAETPRWGSPQQRPPISENSRSVAATIPRRNTLPAMDNSRLHRASSCETYEYPQRGGESAGRSAESMSDGVGSFLPGKMIVGRSDSTNSEDNYVPMNPGSSTLLAMERAGDNSQSVYIPMSPGAHHFDSLGYPSTTLPVHRGPSRGSEIQPPPVNRNLKPDRKAKPTPLDLRNNTVIDELPFKSPITKSWSRANHTFNSSSSQYCRPISTQSITSTDSGDSEENYVPMQNPVSASPVPSGTNSPAPKKSTGSVDYLALDFQPSSPSPHRKPSTSSVTSDEKVDYVQVDKEKTQALQNTMQEWTDVRQSSEPSKGAKL</sequence>
<evidence type="ECO:0000250" key="1"/>
<evidence type="ECO:0000250" key="2">
    <source>
        <dbReference type="UniProtKB" id="Q9Z1S8"/>
    </source>
</evidence>
<evidence type="ECO:0000255" key="3">
    <source>
        <dbReference type="PROSITE-ProRule" id="PRU00145"/>
    </source>
</evidence>
<evidence type="ECO:0000256" key="4">
    <source>
        <dbReference type="SAM" id="MobiDB-lite"/>
    </source>
</evidence>
<evidence type="ECO:0000269" key="5">
    <source>
    </source>
</evidence>
<evidence type="ECO:0000269" key="6">
    <source>
    </source>
</evidence>
<evidence type="ECO:0000269" key="7">
    <source>
    </source>
</evidence>
<evidence type="ECO:0000269" key="8">
    <source>
    </source>
</evidence>
<evidence type="ECO:0000269" key="9">
    <source>
    </source>
</evidence>
<evidence type="ECO:0000269" key="10">
    <source>
    </source>
</evidence>
<evidence type="ECO:0000303" key="11">
    <source>
    </source>
</evidence>
<evidence type="ECO:0000303" key="12">
    <source>
    </source>
</evidence>
<evidence type="ECO:0000305" key="13"/>
<evidence type="ECO:0007744" key="14">
    <source>
    </source>
</evidence>
<evidence type="ECO:0007744" key="15">
    <source>
    </source>
</evidence>
<evidence type="ECO:0007829" key="16">
    <source>
        <dbReference type="PDB" id="2VWF"/>
    </source>
</evidence>
<accession>Q9UQC2</accession>
<accession>A2RRM2</accession>
<accession>A6NEW9</accession>
<accession>A7MD36</accession>
<accession>O60317</accession>